<comment type="subunit">
    <text evidence="3">May interact with CSPP1.</text>
</comment>
<comment type="subcellular location">
    <subcellularLocation>
        <location>Cytoplasm</location>
    </subcellularLocation>
    <subcellularLocation>
        <location>Cytoplasm</location>
        <location>Cytoskeleton</location>
        <location>Microtubule organizing center</location>
        <location>Centrosome</location>
    </subcellularLocation>
    <subcellularLocation>
        <location>Cytoplasm</location>
        <location>Cytoskeleton</location>
        <location>Spindle pole</location>
    </subcellularLocation>
    <text evidence="1">Distributed throughout the cytoplasm during mitosis, accumulating at spindle poles.</text>
</comment>
<comment type="similarity">
    <text evidence="3">Belongs to the FAM110 family.</text>
</comment>
<comment type="sequence caution" evidence="3">
    <conflict type="frameshift">
        <sequence resource="EMBL" id="BC018162"/>
    </conflict>
</comment>
<organism>
    <name type="scientific">Mus musculus</name>
    <name type="common">Mouse</name>
    <dbReference type="NCBI Taxonomy" id="10090"/>
    <lineage>
        <taxon>Eukaryota</taxon>
        <taxon>Metazoa</taxon>
        <taxon>Chordata</taxon>
        <taxon>Craniata</taxon>
        <taxon>Vertebrata</taxon>
        <taxon>Euteleostomi</taxon>
        <taxon>Mammalia</taxon>
        <taxon>Eutheria</taxon>
        <taxon>Euarchontoglires</taxon>
        <taxon>Glires</taxon>
        <taxon>Rodentia</taxon>
        <taxon>Myomorpha</taxon>
        <taxon>Muroidea</taxon>
        <taxon>Muridae</taxon>
        <taxon>Murinae</taxon>
        <taxon>Mus</taxon>
        <taxon>Mus</taxon>
    </lineage>
</organism>
<evidence type="ECO:0000250" key="1"/>
<evidence type="ECO:0000256" key="2">
    <source>
        <dbReference type="SAM" id="MobiDB-lite"/>
    </source>
</evidence>
<evidence type="ECO:0000305" key="3"/>
<feature type="chain" id="PRO_0000079436" description="Protein FAM110A">
    <location>
        <begin position="1"/>
        <end position="296"/>
    </location>
</feature>
<feature type="region of interest" description="Disordered" evidence="2">
    <location>
        <begin position="61"/>
        <end position="97"/>
    </location>
</feature>
<feature type="region of interest" description="Disordered" evidence="2">
    <location>
        <begin position="117"/>
        <end position="192"/>
    </location>
</feature>
<feature type="compositionally biased region" description="Pro residues" evidence="2">
    <location>
        <begin position="139"/>
        <end position="148"/>
    </location>
</feature>
<feature type="compositionally biased region" description="Pro residues" evidence="2">
    <location>
        <begin position="161"/>
        <end position="170"/>
    </location>
</feature>
<feature type="sequence conflict" description="In Ref. 3; AAH25092." evidence="3" ref="3">
    <original>S</original>
    <variation>A</variation>
    <location>
        <position position="261"/>
    </location>
</feature>
<accession>Q8R184</accession>
<accession>Q505P3</accession>
<accession>Q8BQE5</accession>
<accession>Q8K024</accession>
<accession>Q8VEM7</accession>
<accession>Q9CU80</accession>
<reference key="1">
    <citation type="journal article" date="2005" name="Science">
        <title>The transcriptional landscape of the mammalian genome.</title>
        <authorList>
            <person name="Carninci P."/>
            <person name="Kasukawa T."/>
            <person name="Katayama S."/>
            <person name="Gough J."/>
            <person name="Frith M.C."/>
            <person name="Maeda N."/>
            <person name="Oyama R."/>
            <person name="Ravasi T."/>
            <person name="Lenhard B."/>
            <person name="Wells C."/>
            <person name="Kodzius R."/>
            <person name="Shimokawa K."/>
            <person name="Bajic V.B."/>
            <person name="Brenner S.E."/>
            <person name="Batalov S."/>
            <person name="Forrest A.R."/>
            <person name="Zavolan M."/>
            <person name="Davis M.J."/>
            <person name="Wilming L.G."/>
            <person name="Aidinis V."/>
            <person name="Allen J.E."/>
            <person name="Ambesi-Impiombato A."/>
            <person name="Apweiler R."/>
            <person name="Aturaliya R.N."/>
            <person name="Bailey T.L."/>
            <person name="Bansal M."/>
            <person name="Baxter L."/>
            <person name="Beisel K.W."/>
            <person name="Bersano T."/>
            <person name="Bono H."/>
            <person name="Chalk A.M."/>
            <person name="Chiu K.P."/>
            <person name="Choudhary V."/>
            <person name="Christoffels A."/>
            <person name="Clutterbuck D.R."/>
            <person name="Crowe M.L."/>
            <person name="Dalla E."/>
            <person name="Dalrymple B.P."/>
            <person name="de Bono B."/>
            <person name="Della Gatta G."/>
            <person name="di Bernardo D."/>
            <person name="Down T."/>
            <person name="Engstrom P."/>
            <person name="Fagiolini M."/>
            <person name="Faulkner G."/>
            <person name="Fletcher C.F."/>
            <person name="Fukushima T."/>
            <person name="Furuno M."/>
            <person name="Futaki S."/>
            <person name="Gariboldi M."/>
            <person name="Georgii-Hemming P."/>
            <person name="Gingeras T.R."/>
            <person name="Gojobori T."/>
            <person name="Green R.E."/>
            <person name="Gustincich S."/>
            <person name="Harbers M."/>
            <person name="Hayashi Y."/>
            <person name="Hensch T.K."/>
            <person name="Hirokawa N."/>
            <person name="Hill D."/>
            <person name="Huminiecki L."/>
            <person name="Iacono M."/>
            <person name="Ikeo K."/>
            <person name="Iwama A."/>
            <person name="Ishikawa T."/>
            <person name="Jakt M."/>
            <person name="Kanapin A."/>
            <person name="Katoh M."/>
            <person name="Kawasawa Y."/>
            <person name="Kelso J."/>
            <person name="Kitamura H."/>
            <person name="Kitano H."/>
            <person name="Kollias G."/>
            <person name="Krishnan S.P."/>
            <person name="Kruger A."/>
            <person name="Kummerfeld S.K."/>
            <person name="Kurochkin I.V."/>
            <person name="Lareau L.F."/>
            <person name="Lazarevic D."/>
            <person name="Lipovich L."/>
            <person name="Liu J."/>
            <person name="Liuni S."/>
            <person name="McWilliam S."/>
            <person name="Madan Babu M."/>
            <person name="Madera M."/>
            <person name="Marchionni L."/>
            <person name="Matsuda H."/>
            <person name="Matsuzawa S."/>
            <person name="Miki H."/>
            <person name="Mignone F."/>
            <person name="Miyake S."/>
            <person name="Morris K."/>
            <person name="Mottagui-Tabar S."/>
            <person name="Mulder N."/>
            <person name="Nakano N."/>
            <person name="Nakauchi H."/>
            <person name="Ng P."/>
            <person name="Nilsson R."/>
            <person name="Nishiguchi S."/>
            <person name="Nishikawa S."/>
            <person name="Nori F."/>
            <person name="Ohara O."/>
            <person name="Okazaki Y."/>
            <person name="Orlando V."/>
            <person name="Pang K.C."/>
            <person name="Pavan W.J."/>
            <person name="Pavesi G."/>
            <person name="Pesole G."/>
            <person name="Petrovsky N."/>
            <person name="Piazza S."/>
            <person name="Reed J."/>
            <person name="Reid J.F."/>
            <person name="Ring B.Z."/>
            <person name="Ringwald M."/>
            <person name="Rost B."/>
            <person name="Ruan Y."/>
            <person name="Salzberg S.L."/>
            <person name="Sandelin A."/>
            <person name="Schneider C."/>
            <person name="Schoenbach C."/>
            <person name="Sekiguchi K."/>
            <person name="Semple C.A."/>
            <person name="Seno S."/>
            <person name="Sessa L."/>
            <person name="Sheng Y."/>
            <person name="Shibata Y."/>
            <person name="Shimada H."/>
            <person name="Shimada K."/>
            <person name="Silva D."/>
            <person name="Sinclair B."/>
            <person name="Sperling S."/>
            <person name="Stupka E."/>
            <person name="Sugiura K."/>
            <person name="Sultana R."/>
            <person name="Takenaka Y."/>
            <person name="Taki K."/>
            <person name="Tammoja K."/>
            <person name="Tan S.L."/>
            <person name="Tang S."/>
            <person name="Taylor M.S."/>
            <person name="Tegner J."/>
            <person name="Teichmann S.A."/>
            <person name="Ueda H.R."/>
            <person name="van Nimwegen E."/>
            <person name="Verardo R."/>
            <person name="Wei C.L."/>
            <person name="Yagi K."/>
            <person name="Yamanishi H."/>
            <person name="Zabarovsky E."/>
            <person name="Zhu S."/>
            <person name="Zimmer A."/>
            <person name="Hide W."/>
            <person name="Bult C."/>
            <person name="Grimmond S.M."/>
            <person name="Teasdale R.D."/>
            <person name="Liu E.T."/>
            <person name="Brusic V."/>
            <person name="Quackenbush J."/>
            <person name="Wahlestedt C."/>
            <person name="Mattick J.S."/>
            <person name="Hume D.A."/>
            <person name="Kai C."/>
            <person name="Sasaki D."/>
            <person name="Tomaru Y."/>
            <person name="Fukuda S."/>
            <person name="Kanamori-Katayama M."/>
            <person name="Suzuki M."/>
            <person name="Aoki J."/>
            <person name="Arakawa T."/>
            <person name="Iida J."/>
            <person name="Imamura K."/>
            <person name="Itoh M."/>
            <person name="Kato T."/>
            <person name="Kawaji H."/>
            <person name="Kawagashira N."/>
            <person name="Kawashima T."/>
            <person name="Kojima M."/>
            <person name="Kondo S."/>
            <person name="Konno H."/>
            <person name="Nakano K."/>
            <person name="Ninomiya N."/>
            <person name="Nishio T."/>
            <person name="Okada M."/>
            <person name="Plessy C."/>
            <person name="Shibata K."/>
            <person name="Shiraki T."/>
            <person name="Suzuki S."/>
            <person name="Tagami M."/>
            <person name="Waki K."/>
            <person name="Watahiki A."/>
            <person name="Okamura-Oho Y."/>
            <person name="Suzuki H."/>
            <person name="Kawai J."/>
            <person name="Hayashizaki Y."/>
        </authorList>
    </citation>
    <scope>NUCLEOTIDE SEQUENCE [LARGE SCALE MRNA]</scope>
    <source>
        <strain>C57BL/6J</strain>
    </source>
</reference>
<reference key="2">
    <citation type="journal article" date="2009" name="PLoS Biol.">
        <title>Lineage-specific biology revealed by a finished genome assembly of the mouse.</title>
        <authorList>
            <person name="Church D.M."/>
            <person name="Goodstadt L."/>
            <person name="Hillier L.W."/>
            <person name="Zody M.C."/>
            <person name="Goldstein S."/>
            <person name="She X."/>
            <person name="Bult C.J."/>
            <person name="Agarwala R."/>
            <person name="Cherry J.L."/>
            <person name="DiCuccio M."/>
            <person name="Hlavina W."/>
            <person name="Kapustin Y."/>
            <person name="Meric P."/>
            <person name="Maglott D."/>
            <person name="Birtle Z."/>
            <person name="Marques A.C."/>
            <person name="Graves T."/>
            <person name="Zhou S."/>
            <person name="Teague B."/>
            <person name="Potamousis K."/>
            <person name="Churas C."/>
            <person name="Place M."/>
            <person name="Herschleb J."/>
            <person name="Runnheim R."/>
            <person name="Forrest D."/>
            <person name="Amos-Landgraf J."/>
            <person name="Schwartz D.C."/>
            <person name="Cheng Z."/>
            <person name="Lindblad-Toh K."/>
            <person name="Eichler E.E."/>
            <person name="Ponting C.P."/>
        </authorList>
    </citation>
    <scope>NUCLEOTIDE SEQUENCE [LARGE SCALE GENOMIC DNA]</scope>
    <source>
        <strain>C57BL/6J</strain>
    </source>
</reference>
<reference key="3">
    <citation type="journal article" date="2004" name="Genome Res.">
        <title>The status, quality, and expansion of the NIH full-length cDNA project: the Mammalian Gene Collection (MGC).</title>
        <authorList>
            <consortium name="The MGC Project Team"/>
        </authorList>
    </citation>
    <scope>NUCLEOTIDE SEQUENCE [LARGE SCALE MRNA]</scope>
    <source>
        <strain>FVB/N</strain>
        <tissue>Colon</tissue>
        <tissue>Mammary tumor</tissue>
    </source>
</reference>
<proteinExistence type="evidence at transcript level"/>
<dbReference type="EMBL" id="AK050928">
    <property type="protein sequence ID" value="BAC34464.1"/>
    <property type="molecule type" value="mRNA"/>
</dbReference>
<dbReference type="EMBL" id="AL845161">
    <property type="status" value="NOT_ANNOTATED_CDS"/>
    <property type="molecule type" value="Genomic_DNA"/>
</dbReference>
<dbReference type="EMBL" id="BC018162">
    <property type="status" value="NOT_ANNOTATED_CDS"/>
    <property type="molecule type" value="mRNA"/>
</dbReference>
<dbReference type="EMBL" id="BC025092">
    <property type="protein sequence ID" value="AAH25092.1"/>
    <property type="molecule type" value="mRNA"/>
</dbReference>
<dbReference type="EMBL" id="BC034240">
    <property type="protein sequence ID" value="AAH34240.1"/>
    <property type="molecule type" value="mRNA"/>
</dbReference>
<dbReference type="EMBL" id="BC094463">
    <property type="protein sequence ID" value="AAH94463.1"/>
    <property type="molecule type" value="mRNA"/>
</dbReference>
<dbReference type="CCDS" id="CCDS16875.1"/>
<dbReference type="RefSeq" id="NP_001276079.1">
    <property type="nucleotide sequence ID" value="NM_001289150.2"/>
</dbReference>
<dbReference type="RefSeq" id="NP_001276080.1">
    <property type="nucleotide sequence ID" value="NM_001289151.2"/>
</dbReference>
<dbReference type="RefSeq" id="NP_001393330.1">
    <property type="nucleotide sequence ID" value="NM_001406401.1"/>
</dbReference>
<dbReference type="RefSeq" id="NP_082942.2">
    <property type="nucleotide sequence ID" value="NM_028666.4"/>
</dbReference>
<dbReference type="RefSeq" id="NP_666239.1">
    <property type="nucleotide sequence ID" value="NM_146127.4"/>
</dbReference>
<dbReference type="RefSeq" id="XP_006500329.1">
    <property type="nucleotide sequence ID" value="XM_006500266.5"/>
</dbReference>
<dbReference type="FunCoup" id="Q8R184">
    <property type="interactions" value="181"/>
</dbReference>
<dbReference type="STRING" id="10090.ENSMUSP00000105491"/>
<dbReference type="GlyGen" id="Q8R184">
    <property type="glycosylation" value="2 sites"/>
</dbReference>
<dbReference type="iPTMnet" id="Q8R184"/>
<dbReference type="PhosphoSitePlus" id="Q8R184"/>
<dbReference type="PaxDb" id="10090-ENSMUSP00000105491"/>
<dbReference type="ProteomicsDB" id="275492"/>
<dbReference type="Antibodypedia" id="66693">
    <property type="antibodies" value="53 antibodies from 12 providers"/>
</dbReference>
<dbReference type="Ensembl" id="ENSMUST00000062047.6">
    <property type="protein sequence ID" value="ENSMUSP00000053266.6"/>
    <property type="gene ID" value="ENSMUSG00000027459.17"/>
</dbReference>
<dbReference type="Ensembl" id="ENSMUST00000109863.2">
    <property type="protein sequence ID" value="ENSMUSP00000105489.2"/>
    <property type="gene ID" value="ENSMUSG00000027459.17"/>
</dbReference>
<dbReference type="Ensembl" id="ENSMUST00000109864.8">
    <property type="protein sequence ID" value="ENSMUSP00000105490.2"/>
    <property type="gene ID" value="ENSMUSG00000027459.17"/>
</dbReference>
<dbReference type="Ensembl" id="ENSMUST00000109865.8">
    <property type="protein sequence ID" value="ENSMUSP00000105491.2"/>
    <property type="gene ID" value="ENSMUSG00000027459.17"/>
</dbReference>
<dbReference type="GeneID" id="73847"/>
<dbReference type="KEGG" id="mmu:73847"/>
<dbReference type="UCSC" id="uc008ner.2">
    <property type="organism name" value="mouse"/>
</dbReference>
<dbReference type="AGR" id="MGI:1921097"/>
<dbReference type="CTD" id="83541"/>
<dbReference type="MGI" id="MGI:1921097">
    <property type="gene designation" value="Fam110a"/>
</dbReference>
<dbReference type="VEuPathDB" id="HostDB:ENSMUSG00000027459"/>
<dbReference type="eggNOG" id="ENOG502R37V">
    <property type="taxonomic scope" value="Eukaryota"/>
</dbReference>
<dbReference type="GeneTree" id="ENSGT00950000183056"/>
<dbReference type="HOGENOM" id="CLU_050540_0_0_1"/>
<dbReference type="InParanoid" id="Q8R184"/>
<dbReference type="OMA" id="GCRPHLD"/>
<dbReference type="OrthoDB" id="10028183at2759"/>
<dbReference type="PhylomeDB" id="Q8R184"/>
<dbReference type="TreeFam" id="TF330964"/>
<dbReference type="BioGRID-ORCS" id="73847">
    <property type="hits" value="4 hits in 80 CRISPR screens"/>
</dbReference>
<dbReference type="ChiTaRS" id="Fam110a">
    <property type="organism name" value="mouse"/>
</dbReference>
<dbReference type="PRO" id="PR:Q8R184"/>
<dbReference type="Proteomes" id="UP000000589">
    <property type="component" value="Chromosome 2"/>
</dbReference>
<dbReference type="RNAct" id="Q8R184">
    <property type="molecule type" value="protein"/>
</dbReference>
<dbReference type="Bgee" id="ENSMUSG00000027459">
    <property type="expression patterns" value="Expressed in seminiferous tubule of testis and 134 other cell types or tissues"/>
</dbReference>
<dbReference type="GO" id="GO:0005938">
    <property type="term" value="C:cell cortex"/>
    <property type="evidence" value="ECO:0000314"/>
    <property type="project" value="UniProtKB"/>
</dbReference>
<dbReference type="GO" id="GO:0005813">
    <property type="term" value="C:centrosome"/>
    <property type="evidence" value="ECO:0000314"/>
    <property type="project" value="UniProtKB"/>
</dbReference>
<dbReference type="GO" id="GO:0005829">
    <property type="term" value="C:cytosol"/>
    <property type="evidence" value="ECO:0000314"/>
    <property type="project" value="UniProtKB"/>
</dbReference>
<dbReference type="GO" id="GO:0005634">
    <property type="term" value="C:nucleus"/>
    <property type="evidence" value="ECO:0000314"/>
    <property type="project" value="UniProtKB"/>
</dbReference>
<dbReference type="GO" id="GO:0005876">
    <property type="term" value="C:spindle microtubule"/>
    <property type="evidence" value="ECO:0000314"/>
    <property type="project" value="UniProtKB"/>
</dbReference>
<dbReference type="GO" id="GO:0000922">
    <property type="term" value="C:spindle pole"/>
    <property type="evidence" value="ECO:0000314"/>
    <property type="project" value="UniProtKB"/>
</dbReference>
<dbReference type="GO" id="GO:0007052">
    <property type="term" value="P:mitotic spindle organization"/>
    <property type="evidence" value="ECO:0007669"/>
    <property type="project" value="Ensembl"/>
</dbReference>
<dbReference type="InterPro" id="IPR025740">
    <property type="entry name" value="FAM110"/>
</dbReference>
<dbReference type="InterPro" id="IPR025741">
    <property type="entry name" value="FAM110_C"/>
</dbReference>
<dbReference type="InterPro" id="IPR025739">
    <property type="entry name" value="FAM110_N"/>
</dbReference>
<dbReference type="PANTHER" id="PTHR14758">
    <property type="entry name" value="AGAP005440-PA"/>
    <property type="match status" value="1"/>
</dbReference>
<dbReference type="PANTHER" id="PTHR14758:SF4">
    <property type="entry name" value="PROTEIN FAM110A"/>
    <property type="match status" value="1"/>
</dbReference>
<dbReference type="Pfam" id="PF14160">
    <property type="entry name" value="FAM110_C"/>
    <property type="match status" value="1"/>
</dbReference>
<dbReference type="Pfam" id="PF14161">
    <property type="entry name" value="FAM110_N"/>
    <property type="match status" value="1"/>
</dbReference>
<protein>
    <recommendedName>
        <fullName>Protein FAM110A</fullName>
    </recommendedName>
</protein>
<gene>
    <name type="primary">Fam110a</name>
</gene>
<name>F110A_MOUSE</name>
<sequence length="296" mass="31582">MPVDTLSPGAPATPALPFRLRTKVPGYLLPRPADGGARKPSAVERLEADKAKYVKSLRVANTRQEPVQPPLVRQPLFSPGPRGPVLTPSRRVLPCSGRRPQLDLDILSSLINLCDSPVSPSEASRTPGRPEGSAHKVPPATPPRPPPSTVAVRRVDVRPLPASPARPYPSPGTTTTSSPGRPPGLQRSKSDLSERFSRAAADLERFFNFCGLDPEEARGLGVAHLARASSDIVSLAGPSAGPCSSEGGCSRRSSATVEERSLDRVPYGVSVIERNARVIKWLYGLRQARDPPTTEG</sequence>
<keyword id="KW-0963">Cytoplasm</keyword>
<keyword id="KW-0206">Cytoskeleton</keyword>
<keyword id="KW-1185">Reference proteome</keyword>